<feature type="chain" id="PRO_0000163220" description="RNA-binding protein KhpA">
    <location>
        <begin position="1"/>
        <end position="78"/>
    </location>
</feature>
<feature type="domain" description="KH" evidence="1">
    <location>
        <begin position="29"/>
        <end position="78"/>
    </location>
</feature>
<feature type="sequence conflict" description="In Ref. 3; BAA98927." evidence="2" ref="3">
    <original>N</original>
    <variation>T</variation>
    <location>
        <position position="66"/>
    </location>
</feature>
<proteinExistence type="inferred from homology"/>
<dbReference type="EMBL" id="AE001363">
    <property type="protein sequence ID" value="AAD18859.1"/>
    <property type="molecule type" value="Genomic_DNA"/>
</dbReference>
<dbReference type="EMBL" id="AE002161">
    <property type="protein sequence ID" value="AAF37921.1"/>
    <property type="molecule type" value="Genomic_DNA"/>
</dbReference>
<dbReference type="EMBL" id="BA000008">
    <property type="protein sequence ID" value="BAA98927.1"/>
    <property type="molecule type" value="Genomic_DNA"/>
</dbReference>
<dbReference type="EMBL" id="AE009440">
    <property type="protein sequence ID" value="AAP98677.1"/>
    <property type="molecule type" value="Genomic_DNA"/>
</dbReference>
<dbReference type="PIR" id="E86580">
    <property type="entry name" value="E86580"/>
</dbReference>
<dbReference type="PIR" id="H72043">
    <property type="entry name" value="H72043"/>
</dbReference>
<dbReference type="RefSeq" id="NP_224916.1">
    <property type="nucleotide sequence ID" value="NC_000922.1"/>
</dbReference>
<dbReference type="RefSeq" id="WP_010883358.1">
    <property type="nucleotide sequence ID" value="NZ_LN847257.1"/>
</dbReference>
<dbReference type="SMR" id="Q9Z7I5"/>
<dbReference type="STRING" id="406984.CPK_ORF00125"/>
<dbReference type="GeneID" id="45050775"/>
<dbReference type="KEGG" id="cpa:CP_0026"/>
<dbReference type="KEGG" id="cpj:CPj0720"/>
<dbReference type="KEGG" id="cpn:CPn_0720"/>
<dbReference type="KEGG" id="cpt:CpB0748"/>
<dbReference type="PATRIC" id="fig|115713.3.peg.795"/>
<dbReference type="eggNOG" id="COG1837">
    <property type="taxonomic scope" value="Bacteria"/>
</dbReference>
<dbReference type="HOGENOM" id="CLU_132074_1_0_0"/>
<dbReference type="OrthoDB" id="9812389at2"/>
<dbReference type="Proteomes" id="UP000000583">
    <property type="component" value="Chromosome"/>
</dbReference>
<dbReference type="Proteomes" id="UP000000801">
    <property type="component" value="Chromosome"/>
</dbReference>
<dbReference type="GO" id="GO:0005737">
    <property type="term" value="C:cytoplasm"/>
    <property type="evidence" value="ECO:0007669"/>
    <property type="project" value="UniProtKB-SubCell"/>
</dbReference>
<dbReference type="GO" id="GO:0003723">
    <property type="term" value="F:RNA binding"/>
    <property type="evidence" value="ECO:0007669"/>
    <property type="project" value="UniProtKB-UniRule"/>
</dbReference>
<dbReference type="CDD" id="cd22533">
    <property type="entry name" value="KH-II_YlqC-like"/>
    <property type="match status" value="1"/>
</dbReference>
<dbReference type="Gene3D" id="3.30.300.20">
    <property type="match status" value="1"/>
</dbReference>
<dbReference type="HAMAP" id="MF_00088">
    <property type="entry name" value="KhpA"/>
    <property type="match status" value="1"/>
</dbReference>
<dbReference type="InterPro" id="IPR015946">
    <property type="entry name" value="KH_dom-like_a/b"/>
</dbReference>
<dbReference type="InterPro" id="IPR009019">
    <property type="entry name" value="KH_sf_prok-type"/>
</dbReference>
<dbReference type="InterPro" id="IPR020627">
    <property type="entry name" value="KhpA"/>
</dbReference>
<dbReference type="NCBIfam" id="NF002201">
    <property type="entry name" value="PRK01064.1"/>
    <property type="match status" value="1"/>
</dbReference>
<dbReference type="PANTHER" id="PTHR34654:SF1">
    <property type="entry name" value="RNA-BINDING PROTEIN KHPA"/>
    <property type="match status" value="1"/>
</dbReference>
<dbReference type="PANTHER" id="PTHR34654">
    <property type="entry name" value="UPF0109 PROTEIN SCO5592"/>
    <property type="match status" value="1"/>
</dbReference>
<dbReference type="Pfam" id="PF13083">
    <property type="entry name" value="KH_KhpA-B"/>
    <property type="match status" value="1"/>
</dbReference>
<dbReference type="SUPFAM" id="SSF54814">
    <property type="entry name" value="Prokaryotic type KH domain (KH-domain type II)"/>
    <property type="match status" value="1"/>
</dbReference>
<dbReference type="PROSITE" id="PS50084">
    <property type="entry name" value="KH_TYPE_1"/>
    <property type="match status" value="1"/>
</dbReference>
<evidence type="ECO:0000255" key="1">
    <source>
        <dbReference type="HAMAP-Rule" id="MF_00088"/>
    </source>
</evidence>
<evidence type="ECO:0000305" key="2"/>
<gene>
    <name evidence="1" type="primary">khpA</name>
    <name type="ordered locus">CPn_0720</name>
    <name type="ordered locus">CP_0026</name>
    <name type="ordered locus">CPj0720</name>
    <name type="ordered locus">CpB0748</name>
</gene>
<reference key="1">
    <citation type="journal article" date="1999" name="Nat. Genet.">
        <title>Comparative genomes of Chlamydia pneumoniae and C. trachomatis.</title>
        <authorList>
            <person name="Kalman S."/>
            <person name="Mitchell W.P."/>
            <person name="Marathe R."/>
            <person name="Lammel C.J."/>
            <person name="Fan J."/>
            <person name="Hyman R.W."/>
            <person name="Olinger L."/>
            <person name="Grimwood J."/>
            <person name="Davis R.W."/>
            <person name="Stephens R.S."/>
        </authorList>
    </citation>
    <scope>NUCLEOTIDE SEQUENCE [LARGE SCALE GENOMIC DNA]</scope>
    <source>
        <strain>CWL029</strain>
    </source>
</reference>
<reference key="2">
    <citation type="journal article" date="2000" name="Nucleic Acids Res.">
        <title>Genome sequences of Chlamydia trachomatis MoPn and Chlamydia pneumoniae AR39.</title>
        <authorList>
            <person name="Read T.D."/>
            <person name="Brunham R.C."/>
            <person name="Shen C."/>
            <person name="Gill S.R."/>
            <person name="Heidelberg J.F."/>
            <person name="White O."/>
            <person name="Hickey E.K."/>
            <person name="Peterson J.D."/>
            <person name="Utterback T.R."/>
            <person name="Berry K.J."/>
            <person name="Bass S."/>
            <person name="Linher K.D."/>
            <person name="Weidman J.F."/>
            <person name="Khouri H.M."/>
            <person name="Craven B."/>
            <person name="Bowman C."/>
            <person name="Dodson R.J."/>
            <person name="Gwinn M.L."/>
            <person name="Nelson W.C."/>
            <person name="DeBoy R.T."/>
            <person name="Kolonay J.F."/>
            <person name="McClarty G."/>
            <person name="Salzberg S.L."/>
            <person name="Eisen J.A."/>
            <person name="Fraser C.M."/>
        </authorList>
    </citation>
    <scope>NUCLEOTIDE SEQUENCE [LARGE SCALE GENOMIC DNA]</scope>
    <source>
        <strain>AR39</strain>
    </source>
</reference>
<reference key="3">
    <citation type="journal article" date="2000" name="Nucleic Acids Res.">
        <title>Comparison of whole genome sequences of Chlamydia pneumoniae J138 from Japan and CWL029 from USA.</title>
        <authorList>
            <person name="Shirai M."/>
            <person name="Hirakawa H."/>
            <person name="Kimoto M."/>
            <person name="Tabuchi M."/>
            <person name="Kishi F."/>
            <person name="Ouchi K."/>
            <person name="Shiba T."/>
            <person name="Ishii K."/>
            <person name="Hattori M."/>
            <person name="Kuhara S."/>
            <person name="Nakazawa T."/>
        </authorList>
    </citation>
    <scope>NUCLEOTIDE SEQUENCE [LARGE SCALE GENOMIC DNA]</scope>
    <source>
        <strain>J138</strain>
    </source>
</reference>
<reference key="4">
    <citation type="submission" date="2002-05" db="EMBL/GenBank/DDBJ databases">
        <title>The genome sequence of Chlamydia pneumoniae TW183 and comparison with other Chlamydia strains based on whole genome sequence analysis.</title>
        <authorList>
            <person name="Geng M.M."/>
            <person name="Schuhmacher A."/>
            <person name="Muehldorfer I."/>
            <person name="Bensch K.W."/>
            <person name="Schaefer K.P."/>
            <person name="Schneider S."/>
            <person name="Pohl T."/>
            <person name="Essig A."/>
            <person name="Marre R."/>
            <person name="Melchers K."/>
        </authorList>
    </citation>
    <scope>NUCLEOTIDE SEQUENCE [LARGE SCALE GENOMIC DNA]</scope>
    <source>
        <strain>TW-183</strain>
    </source>
</reference>
<organism>
    <name type="scientific">Chlamydia pneumoniae</name>
    <name type="common">Chlamydophila pneumoniae</name>
    <dbReference type="NCBI Taxonomy" id="83558"/>
    <lineage>
        <taxon>Bacteria</taxon>
        <taxon>Pseudomonadati</taxon>
        <taxon>Chlamydiota</taxon>
        <taxon>Chlamydiia</taxon>
        <taxon>Chlamydiales</taxon>
        <taxon>Chlamydiaceae</taxon>
        <taxon>Chlamydia/Chlamydophila group</taxon>
        <taxon>Chlamydia</taxon>
    </lineage>
</organism>
<sequence length="78" mass="8893">MKEFLAYIIKNLVDRPEEVRIKEVQGTHTIIYELSVAKPDIGKIIGKEGRTIKAIRTLLVSVASRNNVRVSLEIMEEK</sequence>
<accession>Q9Z7I5</accession>
<accession>Q9JSB7</accession>
<protein>
    <recommendedName>
        <fullName evidence="1">RNA-binding protein KhpA</fullName>
    </recommendedName>
    <alternativeName>
        <fullName evidence="1">KH-domain protein A</fullName>
    </alternativeName>
</protein>
<comment type="function">
    <text evidence="1">A probable RNA-binding protein.</text>
</comment>
<comment type="subcellular location">
    <subcellularLocation>
        <location evidence="1">Cytoplasm</location>
    </subcellularLocation>
</comment>
<comment type="similarity">
    <text evidence="1">Belongs to the KhpA RNA-binding protein family.</text>
</comment>
<name>KHPA_CHLPN</name>
<keyword id="KW-0963">Cytoplasm</keyword>
<keyword id="KW-0694">RNA-binding</keyword>